<evidence type="ECO:0000255" key="1">
    <source>
        <dbReference type="HAMAP-Rule" id="MF_01227"/>
    </source>
</evidence>
<evidence type="ECO:0000256" key="2">
    <source>
        <dbReference type="SAM" id="MobiDB-lite"/>
    </source>
</evidence>
<accession>A5U357</accession>
<name>PYRG_MYCTA</name>
<dbReference type="EC" id="6.3.4.2" evidence="1"/>
<dbReference type="EMBL" id="CP000611">
    <property type="protein sequence ID" value="ABQ73457.1"/>
    <property type="molecule type" value="Genomic_DNA"/>
</dbReference>
<dbReference type="RefSeq" id="WP_003408396.1">
    <property type="nucleotide sequence ID" value="NZ_CP016972.1"/>
</dbReference>
<dbReference type="SMR" id="A5U357"/>
<dbReference type="MEROPS" id="C26.964"/>
<dbReference type="KEGG" id="mra:MRA_1708"/>
<dbReference type="eggNOG" id="COG0504">
    <property type="taxonomic scope" value="Bacteria"/>
</dbReference>
<dbReference type="HOGENOM" id="CLU_011675_5_0_11"/>
<dbReference type="UniPathway" id="UPA00159">
    <property type="reaction ID" value="UER00277"/>
</dbReference>
<dbReference type="Proteomes" id="UP000001988">
    <property type="component" value="Chromosome"/>
</dbReference>
<dbReference type="GO" id="GO:0005829">
    <property type="term" value="C:cytosol"/>
    <property type="evidence" value="ECO:0007669"/>
    <property type="project" value="TreeGrafter"/>
</dbReference>
<dbReference type="GO" id="GO:0005524">
    <property type="term" value="F:ATP binding"/>
    <property type="evidence" value="ECO:0007669"/>
    <property type="project" value="UniProtKB-KW"/>
</dbReference>
<dbReference type="GO" id="GO:0003883">
    <property type="term" value="F:CTP synthase activity"/>
    <property type="evidence" value="ECO:0007669"/>
    <property type="project" value="UniProtKB-UniRule"/>
</dbReference>
<dbReference type="GO" id="GO:0004359">
    <property type="term" value="F:glutaminase activity"/>
    <property type="evidence" value="ECO:0007669"/>
    <property type="project" value="RHEA"/>
</dbReference>
<dbReference type="GO" id="GO:0042802">
    <property type="term" value="F:identical protein binding"/>
    <property type="evidence" value="ECO:0007669"/>
    <property type="project" value="TreeGrafter"/>
</dbReference>
<dbReference type="GO" id="GO:0046872">
    <property type="term" value="F:metal ion binding"/>
    <property type="evidence" value="ECO:0007669"/>
    <property type="project" value="UniProtKB-KW"/>
</dbReference>
<dbReference type="GO" id="GO:0044210">
    <property type="term" value="P:'de novo' CTP biosynthetic process"/>
    <property type="evidence" value="ECO:0007669"/>
    <property type="project" value="UniProtKB-UniRule"/>
</dbReference>
<dbReference type="GO" id="GO:0019856">
    <property type="term" value="P:pyrimidine nucleobase biosynthetic process"/>
    <property type="evidence" value="ECO:0007669"/>
    <property type="project" value="TreeGrafter"/>
</dbReference>
<dbReference type="CDD" id="cd03113">
    <property type="entry name" value="CTPS_N"/>
    <property type="match status" value="1"/>
</dbReference>
<dbReference type="CDD" id="cd01746">
    <property type="entry name" value="GATase1_CTP_Synthase"/>
    <property type="match status" value="1"/>
</dbReference>
<dbReference type="FunFam" id="3.40.50.300:FF:000009">
    <property type="entry name" value="CTP synthase"/>
    <property type="match status" value="1"/>
</dbReference>
<dbReference type="FunFam" id="3.40.50.880:FF:000002">
    <property type="entry name" value="CTP synthase"/>
    <property type="match status" value="1"/>
</dbReference>
<dbReference type="Gene3D" id="3.40.50.880">
    <property type="match status" value="1"/>
</dbReference>
<dbReference type="Gene3D" id="3.40.50.300">
    <property type="entry name" value="P-loop containing nucleotide triphosphate hydrolases"/>
    <property type="match status" value="1"/>
</dbReference>
<dbReference type="HAMAP" id="MF_01227">
    <property type="entry name" value="PyrG"/>
    <property type="match status" value="1"/>
</dbReference>
<dbReference type="InterPro" id="IPR029062">
    <property type="entry name" value="Class_I_gatase-like"/>
</dbReference>
<dbReference type="InterPro" id="IPR004468">
    <property type="entry name" value="CTP_synthase"/>
</dbReference>
<dbReference type="InterPro" id="IPR017456">
    <property type="entry name" value="CTP_synthase_N"/>
</dbReference>
<dbReference type="InterPro" id="IPR017926">
    <property type="entry name" value="GATASE"/>
</dbReference>
<dbReference type="InterPro" id="IPR033828">
    <property type="entry name" value="GATase1_CTP_Synthase"/>
</dbReference>
<dbReference type="InterPro" id="IPR027417">
    <property type="entry name" value="P-loop_NTPase"/>
</dbReference>
<dbReference type="NCBIfam" id="NF003792">
    <property type="entry name" value="PRK05380.1"/>
    <property type="match status" value="1"/>
</dbReference>
<dbReference type="NCBIfam" id="TIGR00337">
    <property type="entry name" value="PyrG"/>
    <property type="match status" value="1"/>
</dbReference>
<dbReference type="PANTHER" id="PTHR11550">
    <property type="entry name" value="CTP SYNTHASE"/>
    <property type="match status" value="1"/>
</dbReference>
<dbReference type="PANTHER" id="PTHR11550:SF0">
    <property type="entry name" value="CTP SYNTHASE-RELATED"/>
    <property type="match status" value="1"/>
</dbReference>
<dbReference type="Pfam" id="PF06418">
    <property type="entry name" value="CTP_synth_N"/>
    <property type="match status" value="1"/>
</dbReference>
<dbReference type="Pfam" id="PF00117">
    <property type="entry name" value="GATase"/>
    <property type="match status" value="1"/>
</dbReference>
<dbReference type="SUPFAM" id="SSF52317">
    <property type="entry name" value="Class I glutamine amidotransferase-like"/>
    <property type="match status" value="1"/>
</dbReference>
<dbReference type="SUPFAM" id="SSF52540">
    <property type="entry name" value="P-loop containing nucleoside triphosphate hydrolases"/>
    <property type="match status" value="1"/>
</dbReference>
<dbReference type="PROSITE" id="PS51273">
    <property type="entry name" value="GATASE_TYPE_1"/>
    <property type="match status" value="1"/>
</dbReference>
<comment type="function">
    <text evidence="1">Catalyzes the ATP-dependent amination of UTP to CTP with either L-glutamine or ammonia as the source of nitrogen. Regulates intracellular CTP levels through interactions with the four ribonucleotide triphosphates.</text>
</comment>
<comment type="catalytic activity">
    <reaction evidence="1">
        <text>UTP + L-glutamine + ATP + H2O = CTP + L-glutamate + ADP + phosphate + 2 H(+)</text>
        <dbReference type="Rhea" id="RHEA:26426"/>
        <dbReference type="ChEBI" id="CHEBI:15377"/>
        <dbReference type="ChEBI" id="CHEBI:15378"/>
        <dbReference type="ChEBI" id="CHEBI:29985"/>
        <dbReference type="ChEBI" id="CHEBI:30616"/>
        <dbReference type="ChEBI" id="CHEBI:37563"/>
        <dbReference type="ChEBI" id="CHEBI:43474"/>
        <dbReference type="ChEBI" id="CHEBI:46398"/>
        <dbReference type="ChEBI" id="CHEBI:58359"/>
        <dbReference type="ChEBI" id="CHEBI:456216"/>
        <dbReference type="EC" id="6.3.4.2"/>
    </reaction>
</comment>
<comment type="catalytic activity">
    <reaction evidence="1">
        <text>L-glutamine + H2O = L-glutamate + NH4(+)</text>
        <dbReference type="Rhea" id="RHEA:15889"/>
        <dbReference type="ChEBI" id="CHEBI:15377"/>
        <dbReference type="ChEBI" id="CHEBI:28938"/>
        <dbReference type="ChEBI" id="CHEBI:29985"/>
        <dbReference type="ChEBI" id="CHEBI:58359"/>
    </reaction>
</comment>
<comment type="catalytic activity">
    <reaction evidence="1">
        <text>UTP + NH4(+) + ATP = CTP + ADP + phosphate + 2 H(+)</text>
        <dbReference type="Rhea" id="RHEA:16597"/>
        <dbReference type="ChEBI" id="CHEBI:15378"/>
        <dbReference type="ChEBI" id="CHEBI:28938"/>
        <dbReference type="ChEBI" id="CHEBI:30616"/>
        <dbReference type="ChEBI" id="CHEBI:37563"/>
        <dbReference type="ChEBI" id="CHEBI:43474"/>
        <dbReference type="ChEBI" id="CHEBI:46398"/>
        <dbReference type="ChEBI" id="CHEBI:456216"/>
    </reaction>
</comment>
<comment type="activity regulation">
    <text evidence="1">Allosterically activated by GTP, when glutamine is the substrate; GTP has no effect on the reaction when ammonia is the substrate. The allosteric effector GTP functions by stabilizing the protein conformation that binds the tetrahedral intermediate(s) formed during glutamine hydrolysis. Inhibited by the product CTP, via allosteric rather than competitive inhibition.</text>
</comment>
<comment type="pathway">
    <text evidence="1">Pyrimidine metabolism; CTP biosynthesis via de novo pathway; CTP from UDP: step 2/2.</text>
</comment>
<comment type="subunit">
    <text evidence="1">Homotetramer.</text>
</comment>
<comment type="miscellaneous">
    <text evidence="1">CTPSs have evolved a hybrid strategy for distinguishing between UTP and CTP. The overlapping regions of the product feedback inhibitory and substrate sites recognize a common feature in both compounds, the triphosphate moiety. To differentiate isosteric substrate and product pyrimidine rings, an additional pocket far from the expected kinase/ligase catalytic site, specifically recognizes the cytosine and ribose portions of the product inhibitor.</text>
</comment>
<comment type="similarity">
    <text evidence="1">Belongs to the CTP synthase family.</text>
</comment>
<gene>
    <name evidence="1" type="primary">pyrG</name>
    <name type="ordered locus">MRA_1708</name>
</gene>
<proteinExistence type="inferred from homology"/>
<keyword id="KW-0067">ATP-binding</keyword>
<keyword id="KW-0315">Glutamine amidotransferase</keyword>
<keyword id="KW-0436">Ligase</keyword>
<keyword id="KW-0460">Magnesium</keyword>
<keyword id="KW-0479">Metal-binding</keyword>
<keyword id="KW-0547">Nucleotide-binding</keyword>
<keyword id="KW-0665">Pyrimidine biosynthesis</keyword>
<keyword id="KW-1185">Reference proteome</keyword>
<organism>
    <name type="scientific">Mycobacterium tuberculosis (strain ATCC 25177 / H37Ra)</name>
    <dbReference type="NCBI Taxonomy" id="419947"/>
    <lineage>
        <taxon>Bacteria</taxon>
        <taxon>Bacillati</taxon>
        <taxon>Actinomycetota</taxon>
        <taxon>Actinomycetes</taxon>
        <taxon>Mycobacteriales</taxon>
        <taxon>Mycobacteriaceae</taxon>
        <taxon>Mycobacterium</taxon>
        <taxon>Mycobacterium tuberculosis complex</taxon>
    </lineage>
</organism>
<reference key="1">
    <citation type="journal article" date="2008" name="PLoS ONE">
        <title>Genetic basis of virulence attenuation revealed by comparative genomic analysis of Mycobacterium tuberculosis strain H37Ra versus H37Rv.</title>
        <authorList>
            <person name="Zheng H."/>
            <person name="Lu L."/>
            <person name="Wang B."/>
            <person name="Pu S."/>
            <person name="Zhang X."/>
            <person name="Zhu G."/>
            <person name="Shi W."/>
            <person name="Zhang L."/>
            <person name="Wang H."/>
            <person name="Wang S."/>
            <person name="Zhao G."/>
            <person name="Zhang Y."/>
        </authorList>
    </citation>
    <scope>NUCLEOTIDE SEQUENCE [LARGE SCALE GENOMIC DNA]</scope>
    <source>
        <strain>ATCC 25177 / H37Ra</strain>
    </source>
</reference>
<protein>
    <recommendedName>
        <fullName evidence="1">CTP synthase</fullName>
        <ecNumber evidence="1">6.3.4.2</ecNumber>
    </recommendedName>
    <alternativeName>
        <fullName evidence="1">Cytidine 5'-triphosphate synthase</fullName>
    </alternativeName>
    <alternativeName>
        <fullName evidence="1">Cytidine triphosphate synthetase</fullName>
        <shortName evidence="1">CTP synthetase</shortName>
        <shortName evidence="1">CTPS</shortName>
    </alternativeName>
    <alternativeName>
        <fullName evidence="1">UTP--ammonia ligase</fullName>
    </alternativeName>
</protein>
<sequence length="586" mass="63635">MRKHPQTATKHLFVSGGVASSLGKGLTASSLGQLLTARGLHVTMQKLDPYLNVDPGTMNPFQHGEVFVTEDGAETDLDVGHYERFLDRNLPGSANVTTGQVYSTVIAKERRGEYLGDTVQVIPHITDEIKRRILAMAQPDADGNRPDVVITEIGGTVGDIESQPFLEAARQVRHYLGREDVFFLHVSLVPYLAPSGELKTKPTQHSVAALRSIGITPDALILRCDRDVPEALKNKIALMCDVDIDGVISTPDAPSIYDIPKVLHREELDAFVVRRLNLPFRDVDWTEWDDLLRRVHEPHETVRIALVGKYVELSDAYLSVAEALRAGGFKHRAKVEICWVASDGCETTSGAAAALGDVHGVLIPGGFGIRGIEGKIGAIAYARARGLPVLGLCLGLQCIVIEAARSVGLTNANSAEFDPDTPDPVIATMPDQEEIVAGEADLGGTMRLGSYPAVLEPDSVVAQAYQTTQVSERHRHRYEVNNAYRDKIAESGLRFSGTSPDGHLVEFVEYPPDRHPFVVGTQAHPELKSRPTRPHPLFVAFVGAAIDYKAGELLPVEIPEIPEHTPNGSSHRDGVGQPLPEPASRG</sequence>
<feature type="chain" id="PRO_1000139499" description="CTP synthase">
    <location>
        <begin position="1"/>
        <end position="586"/>
    </location>
</feature>
<feature type="domain" description="Glutamine amidotransferase type-1" evidence="1">
    <location>
        <begin position="303"/>
        <end position="551"/>
    </location>
</feature>
<feature type="region of interest" description="Amidoligase domain" evidence="1">
    <location>
        <begin position="1"/>
        <end position="278"/>
    </location>
</feature>
<feature type="region of interest" description="Disordered" evidence="2">
    <location>
        <begin position="560"/>
        <end position="586"/>
    </location>
</feature>
<feature type="active site" description="Nucleophile; for glutamine hydrolysis" evidence="1">
    <location>
        <position position="393"/>
    </location>
</feature>
<feature type="active site" evidence="1">
    <location>
        <position position="524"/>
    </location>
</feature>
<feature type="active site" evidence="1">
    <location>
        <position position="526"/>
    </location>
</feature>
<feature type="binding site" evidence="1">
    <location>
        <position position="20"/>
    </location>
    <ligand>
        <name>CTP</name>
        <dbReference type="ChEBI" id="CHEBI:37563"/>
        <note>allosteric inhibitor</note>
    </ligand>
</feature>
<feature type="binding site" evidence="1">
    <location>
        <position position="20"/>
    </location>
    <ligand>
        <name>UTP</name>
        <dbReference type="ChEBI" id="CHEBI:46398"/>
    </ligand>
</feature>
<feature type="binding site" evidence="1">
    <location>
        <begin position="21"/>
        <end position="26"/>
    </location>
    <ligand>
        <name>ATP</name>
        <dbReference type="ChEBI" id="CHEBI:30616"/>
    </ligand>
</feature>
<feature type="binding site" evidence="1">
    <location>
        <position position="78"/>
    </location>
    <ligand>
        <name>ATP</name>
        <dbReference type="ChEBI" id="CHEBI:30616"/>
    </ligand>
</feature>
<feature type="binding site" evidence="1">
    <location>
        <position position="78"/>
    </location>
    <ligand>
        <name>Mg(2+)</name>
        <dbReference type="ChEBI" id="CHEBI:18420"/>
    </ligand>
</feature>
<feature type="binding site" evidence="1">
    <location>
        <position position="152"/>
    </location>
    <ligand>
        <name>Mg(2+)</name>
        <dbReference type="ChEBI" id="CHEBI:18420"/>
    </ligand>
</feature>
<feature type="binding site" evidence="1">
    <location>
        <begin position="159"/>
        <end position="161"/>
    </location>
    <ligand>
        <name>CTP</name>
        <dbReference type="ChEBI" id="CHEBI:37563"/>
        <note>allosteric inhibitor</note>
    </ligand>
</feature>
<feature type="binding site" evidence="1">
    <location>
        <begin position="199"/>
        <end position="204"/>
    </location>
    <ligand>
        <name>CTP</name>
        <dbReference type="ChEBI" id="CHEBI:37563"/>
        <note>allosteric inhibitor</note>
    </ligand>
</feature>
<feature type="binding site" evidence="1">
    <location>
        <begin position="199"/>
        <end position="204"/>
    </location>
    <ligand>
        <name>UTP</name>
        <dbReference type="ChEBI" id="CHEBI:46398"/>
    </ligand>
</feature>
<feature type="binding site" evidence="1">
    <location>
        <position position="235"/>
    </location>
    <ligand>
        <name>CTP</name>
        <dbReference type="ChEBI" id="CHEBI:37563"/>
        <note>allosteric inhibitor</note>
    </ligand>
</feature>
<feature type="binding site" evidence="1">
    <location>
        <position position="235"/>
    </location>
    <ligand>
        <name>UTP</name>
        <dbReference type="ChEBI" id="CHEBI:46398"/>
    </ligand>
</feature>
<feature type="binding site" evidence="1">
    <location>
        <position position="366"/>
    </location>
    <ligand>
        <name>L-glutamine</name>
        <dbReference type="ChEBI" id="CHEBI:58359"/>
    </ligand>
</feature>
<feature type="binding site" evidence="1">
    <location>
        <begin position="394"/>
        <end position="397"/>
    </location>
    <ligand>
        <name>L-glutamine</name>
        <dbReference type="ChEBI" id="CHEBI:58359"/>
    </ligand>
</feature>
<feature type="binding site" evidence="1">
    <location>
        <position position="416"/>
    </location>
    <ligand>
        <name>L-glutamine</name>
        <dbReference type="ChEBI" id="CHEBI:58359"/>
    </ligand>
</feature>
<feature type="binding site" evidence="1">
    <location>
        <position position="477"/>
    </location>
    <ligand>
        <name>L-glutamine</name>
        <dbReference type="ChEBI" id="CHEBI:58359"/>
    </ligand>
</feature>